<sequence length="168" mass="19553">MPRSRINGNFIDQTFSIVANILLRVIPTTSGEKEAFTYYRDGMSAQSEGNYAEALQNYYEAMRLEIDPYDRSYILYNIGLIHTSNGEHTKALEYYFRALERNPFLPQAFNNMAVICHYRGEQAIQQGDSEIAEAWFDQAAEYWKQAIALTPGNYIEAHNWLKITRRFE</sequence>
<dbReference type="EMBL" id="AJ316582">
    <property type="protein sequence ID" value="CAC88045.1"/>
    <property type="molecule type" value="Genomic_DNA"/>
</dbReference>
<dbReference type="RefSeq" id="NP_783233.1">
    <property type="nucleotide sequence ID" value="NC_004561.1"/>
</dbReference>
<dbReference type="SMR" id="Q8S8X3"/>
<dbReference type="GeneID" id="806536"/>
<dbReference type="GO" id="GO:0009535">
    <property type="term" value="C:chloroplast thylakoid membrane"/>
    <property type="evidence" value="ECO:0007669"/>
    <property type="project" value="UniProtKB-SubCell"/>
</dbReference>
<dbReference type="GO" id="GO:0015979">
    <property type="term" value="P:photosynthesis"/>
    <property type="evidence" value="ECO:0007669"/>
    <property type="project" value="UniProtKB-UniRule"/>
</dbReference>
<dbReference type="FunFam" id="1.25.40.10:FF:000004">
    <property type="entry name" value="Photosystem I assembly protein Ycf3"/>
    <property type="match status" value="1"/>
</dbReference>
<dbReference type="Gene3D" id="1.25.40.10">
    <property type="entry name" value="Tetratricopeptide repeat domain"/>
    <property type="match status" value="1"/>
</dbReference>
<dbReference type="HAMAP" id="MF_00439">
    <property type="entry name" value="Ycf3"/>
    <property type="match status" value="1"/>
</dbReference>
<dbReference type="InterPro" id="IPR022818">
    <property type="entry name" value="PSI_Ycf3_assembly"/>
</dbReference>
<dbReference type="InterPro" id="IPR011990">
    <property type="entry name" value="TPR-like_helical_dom_sf"/>
</dbReference>
<dbReference type="InterPro" id="IPR019734">
    <property type="entry name" value="TPR_rpt"/>
</dbReference>
<dbReference type="InterPro" id="IPR051685">
    <property type="entry name" value="Ycf3/AcsC/BcsC/TPR_MFPF"/>
</dbReference>
<dbReference type="NCBIfam" id="NF002725">
    <property type="entry name" value="PRK02603.1"/>
    <property type="match status" value="1"/>
</dbReference>
<dbReference type="PANTHER" id="PTHR44943">
    <property type="entry name" value="CELLULOSE SYNTHASE OPERON PROTEIN C"/>
    <property type="match status" value="1"/>
</dbReference>
<dbReference type="PANTHER" id="PTHR44943:SF8">
    <property type="entry name" value="TPR REPEAT-CONTAINING PROTEIN MJ0263"/>
    <property type="match status" value="1"/>
</dbReference>
<dbReference type="Pfam" id="PF00515">
    <property type="entry name" value="TPR_1"/>
    <property type="match status" value="1"/>
</dbReference>
<dbReference type="SMART" id="SM00028">
    <property type="entry name" value="TPR"/>
    <property type="match status" value="3"/>
</dbReference>
<dbReference type="SUPFAM" id="SSF48452">
    <property type="entry name" value="TPR-like"/>
    <property type="match status" value="1"/>
</dbReference>
<dbReference type="PROSITE" id="PS50005">
    <property type="entry name" value="TPR"/>
    <property type="match status" value="3"/>
</dbReference>
<dbReference type="PROSITE" id="PS50293">
    <property type="entry name" value="TPR_REGION"/>
    <property type="match status" value="2"/>
</dbReference>
<keyword id="KW-0150">Chloroplast</keyword>
<keyword id="KW-0472">Membrane</keyword>
<keyword id="KW-0602">Photosynthesis</keyword>
<keyword id="KW-0934">Plastid</keyword>
<keyword id="KW-0677">Repeat</keyword>
<keyword id="KW-0793">Thylakoid</keyword>
<keyword id="KW-0802">TPR repeat</keyword>
<comment type="function">
    <text evidence="1">Essential for the assembly of the photosystem I (PSI) complex. May act as a chaperone-like factor to guide the assembly of the PSI subunits.</text>
</comment>
<comment type="subcellular location">
    <subcellularLocation>
        <location evidence="1">Plastid</location>
        <location evidence="1">Chloroplast thylakoid membrane</location>
        <topology evidence="1">Peripheral membrane protein</topology>
    </subcellularLocation>
</comment>
<comment type="similarity">
    <text evidence="1">Belongs to the Ycf3 family.</text>
</comment>
<name>YCF3_ATRBE</name>
<gene>
    <name evidence="1" type="primary">ycf3</name>
</gene>
<feature type="chain" id="PRO_0000217793" description="Photosystem I assembly protein Ycf3">
    <location>
        <begin position="1"/>
        <end position="168"/>
    </location>
</feature>
<feature type="repeat" description="TPR 1">
    <location>
        <begin position="35"/>
        <end position="68"/>
    </location>
</feature>
<feature type="repeat" description="TPR 2">
    <location>
        <begin position="72"/>
        <end position="105"/>
    </location>
</feature>
<feature type="repeat" description="TPR 3">
    <location>
        <begin position="120"/>
        <end position="153"/>
    </location>
</feature>
<reference key="1">
    <citation type="journal article" date="2002" name="Mol. Biol. Evol.">
        <title>The plastid chromosome of Atropa belladonna and its comparison with that of Nicotiana tabacum: the role of RNA editing in generating divergence in the process of plant speciation.</title>
        <authorList>
            <person name="Schmitz-Linneweber C."/>
            <person name="Regel R."/>
            <person name="Du T.G."/>
            <person name="Hupfer H."/>
            <person name="Herrmann R.G."/>
            <person name="Maier R.M."/>
        </authorList>
    </citation>
    <scope>NUCLEOTIDE SEQUENCE [LARGE SCALE GENOMIC DNA]</scope>
    <source>
        <strain>cv. Ab5p(kan)</strain>
    </source>
</reference>
<accession>Q8S8X3</accession>
<geneLocation type="chloroplast"/>
<protein>
    <recommendedName>
        <fullName evidence="1">Photosystem I assembly protein Ycf3</fullName>
    </recommendedName>
</protein>
<evidence type="ECO:0000255" key="1">
    <source>
        <dbReference type="HAMAP-Rule" id="MF_00439"/>
    </source>
</evidence>
<proteinExistence type="inferred from homology"/>
<organism>
    <name type="scientific">Atropa belladonna</name>
    <name type="common">Belladonna</name>
    <name type="synonym">Deadly nightshade</name>
    <dbReference type="NCBI Taxonomy" id="33113"/>
    <lineage>
        <taxon>Eukaryota</taxon>
        <taxon>Viridiplantae</taxon>
        <taxon>Streptophyta</taxon>
        <taxon>Embryophyta</taxon>
        <taxon>Tracheophyta</taxon>
        <taxon>Spermatophyta</taxon>
        <taxon>Magnoliopsida</taxon>
        <taxon>eudicotyledons</taxon>
        <taxon>Gunneridae</taxon>
        <taxon>Pentapetalae</taxon>
        <taxon>asterids</taxon>
        <taxon>lamiids</taxon>
        <taxon>Solanales</taxon>
        <taxon>Solanaceae</taxon>
        <taxon>Solanoideae</taxon>
        <taxon>Hyoscyameae</taxon>
        <taxon>Atropa</taxon>
    </lineage>
</organism>